<sequence length="253" mass="28676">MPIKPVGWICGQVLKNFSGRIEGIQKVIMDLIDEFKDEFPTILRLSQSNQKREPMQKPSKIRMAIALAKINRGTLIQGLNSISRSSKSVAKLLQPQLACRLLELRAISHRLLKEVNAPRQPLYNIQVRKGSLFEIISFPAKTALTSIMCASYAALIYLTVCVNAVLEKIMKIFQEEESIRQNREESENFRNAFSEPVLSEPLFPEGEIKAKPYRSLPEKPDSISDRPKLPANKLSNKIQVLHSVFDQSAEMNE</sequence>
<proteinExistence type="evidence at transcript level"/>
<reference key="1">
    <citation type="submission" date="2005-08" db="EMBL/GenBank/DDBJ databases">
        <authorList>
            <consortium name="NIH - Mammalian Gene Collection (MGC) project"/>
        </authorList>
    </citation>
    <scope>NUCLEOTIDE SEQUENCE [LARGE SCALE MRNA]</scope>
    <source>
        <strain>Crossbred X Angus</strain>
        <tissue>Liver</tissue>
    </source>
</reference>
<name>SPAT9_BOVIN</name>
<organism>
    <name type="scientific">Bos taurus</name>
    <name type="common">Bovine</name>
    <dbReference type="NCBI Taxonomy" id="9913"/>
    <lineage>
        <taxon>Eukaryota</taxon>
        <taxon>Metazoa</taxon>
        <taxon>Chordata</taxon>
        <taxon>Craniata</taxon>
        <taxon>Vertebrata</taxon>
        <taxon>Euteleostomi</taxon>
        <taxon>Mammalia</taxon>
        <taxon>Eutheria</taxon>
        <taxon>Laurasiatheria</taxon>
        <taxon>Artiodactyla</taxon>
        <taxon>Ruminantia</taxon>
        <taxon>Pecora</taxon>
        <taxon>Bovidae</taxon>
        <taxon>Bovinae</taxon>
        <taxon>Bos</taxon>
    </lineage>
</organism>
<gene>
    <name type="primary">SPATA9</name>
</gene>
<comment type="function">
    <text evidence="1">May play at role in testicular development/spermatogenesis and may be an important factor in male infertility.</text>
</comment>
<comment type="subcellular location">
    <subcellularLocation>
        <location evidence="1">Membrane</location>
        <topology evidence="1">Single-pass membrane protein</topology>
    </subcellularLocation>
</comment>
<accession>Q3T021</accession>
<protein>
    <recommendedName>
        <fullName>Spermatogenesis-associated protein 9</fullName>
    </recommendedName>
</protein>
<evidence type="ECO:0000250" key="1"/>
<evidence type="ECO:0000255" key="2"/>
<evidence type="ECO:0000256" key="3">
    <source>
        <dbReference type="SAM" id="MobiDB-lite"/>
    </source>
</evidence>
<keyword id="KW-0217">Developmental protein</keyword>
<keyword id="KW-0221">Differentiation</keyword>
<keyword id="KW-0472">Membrane</keyword>
<keyword id="KW-1185">Reference proteome</keyword>
<keyword id="KW-0744">Spermatogenesis</keyword>
<keyword id="KW-0812">Transmembrane</keyword>
<keyword id="KW-1133">Transmembrane helix</keyword>
<feature type="chain" id="PRO_0000278445" description="Spermatogenesis-associated protein 9">
    <location>
        <begin position="1"/>
        <end position="253"/>
    </location>
</feature>
<feature type="transmembrane region" description="Helical" evidence="2">
    <location>
        <begin position="144"/>
        <end position="166"/>
    </location>
</feature>
<feature type="region of interest" description="Disordered" evidence="3">
    <location>
        <begin position="210"/>
        <end position="231"/>
    </location>
</feature>
<feature type="compositionally biased region" description="Basic and acidic residues" evidence="3">
    <location>
        <begin position="210"/>
        <end position="228"/>
    </location>
</feature>
<dbReference type="EMBL" id="BC102604">
    <property type="protein sequence ID" value="AAI02605.1"/>
    <property type="molecule type" value="mRNA"/>
</dbReference>
<dbReference type="RefSeq" id="NP_001029908.1">
    <property type="nucleotide sequence ID" value="NM_001034736.2"/>
</dbReference>
<dbReference type="SMR" id="Q3T021"/>
<dbReference type="FunCoup" id="Q3T021">
    <property type="interactions" value="40"/>
</dbReference>
<dbReference type="STRING" id="9913.ENSBTAP00000009510"/>
<dbReference type="PaxDb" id="9913-ENSBTAP00000009510"/>
<dbReference type="Ensembl" id="ENSBTAT00000009510.4">
    <property type="protein sequence ID" value="ENSBTAP00000009510.3"/>
    <property type="gene ID" value="ENSBTAG00000007231.4"/>
</dbReference>
<dbReference type="GeneID" id="613406"/>
<dbReference type="KEGG" id="bta:613406"/>
<dbReference type="CTD" id="83890"/>
<dbReference type="VEuPathDB" id="HostDB:ENSBTAG00000007231"/>
<dbReference type="VGNC" id="VGNC:35192">
    <property type="gene designation" value="SPATA9"/>
</dbReference>
<dbReference type="eggNOG" id="ENOG502SNFZ">
    <property type="taxonomic scope" value="Eukaryota"/>
</dbReference>
<dbReference type="GeneTree" id="ENSGT00390000014160"/>
<dbReference type="HOGENOM" id="CLU_097205_0_0_1"/>
<dbReference type="InParanoid" id="Q3T021"/>
<dbReference type="OMA" id="LSEPMFP"/>
<dbReference type="OrthoDB" id="9442549at2759"/>
<dbReference type="TreeFam" id="TF338769"/>
<dbReference type="Proteomes" id="UP000009136">
    <property type="component" value="Chromosome 7"/>
</dbReference>
<dbReference type="Bgee" id="ENSBTAG00000007231">
    <property type="expression patterns" value="Expressed in semen and 89 other cell types or tissues"/>
</dbReference>
<dbReference type="GO" id="GO:0016020">
    <property type="term" value="C:membrane"/>
    <property type="evidence" value="ECO:0007669"/>
    <property type="project" value="UniProtKB-SubCell"/>
</dbReference>
<dbReference type="GO" id="GO:0030154">
    <property type="term" value="P:cell differentiation"/>
    <property type="evidence" value="ECO:0007669"/>
    <property type="project" value="UniProtKB-KW"/>
</dbReference>
<dbReference type="GO" id="GO:0007283">
    <property type="term" value="P:spermatogenesis"/>
    <property type="evidence" value="ECO:0007669"/>
    <property type="project" value="UniProtKB-KW"/>
</dbReference>
<dbReference type="InterPro" id="IPR031659">
    <property type="entry name" value="SPATA9"/>
</dbReference>
<dbReference type="PANTHER" id="PTHR35669">
    <property type="entry name" value="SPERMATOGENESIS-ASSOCIATED PROTEIN 9"/>
    <property type="match status" value="1"/>
</dbReference>
<dbReference type="PANTHER" id="PTHR35669:SF1">
    <property type="entry name" value="SPERMATOGENESIS-ASSOCIATED PROTEIN 9"/>
    <property type="match status" value="1"/>
</dbReference>
<dbReference type="Pfam" id="PF15824">
    <property type="entry name" value="SPATA9"/>
    <property type="match status" value="1"/>
</dbReference>